<proteinExistence type="inferred from homology"/>
<organism>
    <name type="scientific">Syntrophobacter fumaroxidans (strain DSM 10017 / MPOB)</name>
    <dbReference type="NCBI Taxonomy" id="335543"/>
    <lineage>
        <taxon>Bacteria</taxon>
        <taxon>Pseudomonadati</taxon>
        <taxon>Thermodesulfobacteriota</taxon>
        <taxon>Syntrophobacteria</taxon>
        <taxon>Syntrophobacterales</taxon>
        <taxon>Syntrophobacteraceae</taxon>
        <taxon>Syntrophobacter</taxon>
    </lineage>
</organism>
<sequence>MARIAGIDLPKNKRIEIALTYIYGIGRPTAQKILEQANIDGNTKSDDLTENQINSIRHVIDSHYKVEGDLRTEVSMNIKRLMDLGCYRGLRHRRGLPVRGQRTHTNARTRKGPRRSVMGKRKKA</sequence>
<protein>
    <recommendedName>
        <fullName evidence="1">Small ribosomal subunit protein uS13</fullName>
    </recommendedName>
    <alternativeName>
        <fullName evidence="3">30S ribosomal protein S13</fullName>
    </alternativeName>
</protein>
<gene>
    <name evidence="1" type="primary">rpsM</name>
    <name type="ordered locus">Sfum_1579</name>
</gene>
<feature type="chain" id="PRO_0000306736" description="Small ribosomal subunit protein uS13">
    <location>
        <begin position="1"/>
        <end position="124"/>
    </location>
</feature>
<feature type="region of interest" description="Disordered" evidence="2">
    <location>
        <begin position="95"/>
        <end position="124"/>
    </location>
</feature>
<reference key="1">
    <citation type="submission" date="2006-10" db="EMBL/GenBank/DDBJ databases">
        <title>Complete sequence of Syntrophobacter fumaroxidans MPOB.</title>
        <authorList>
            <consortium name="US DOE Joint Genome Institute"/>
            <person name="Copeland A."/>
            <person name="Lucas S."/>
            <person name="Lapidus A."/>
            <person name="Barry K."/>
            <person name="Detter J.C."/>
            <person name="Glavina del Rio T."/>
            <person name="Hammon N."/>
            <person name="Israni S."/>
            <person name="Pitluck S."/>
            <person name="Goltsman E.G."/>
            <person name="Martinez M."/>
            <person name="Schmutz J."/>
            <person name="Larimer F."/>
            <person name="Land M."/>
            <person name="Hauser L."/>
            <person name="Kyrpides N."/>
            <person name="Kim E."/>
            <person name="Boone D.R."/>
            <person name="Brockman F."/>
            <person name="Culley D."/>
            <person name="Ferry J."/>
            <person name="Gunsalus R."/>
            <person name="McInerney M.J."/>
            <person name="Morrison M."/>
            <person name="Plugge C."/>
            <person name="Rohlin L."/>
            <person name="Scholten J."/>
            <person name="Sieber J."/>
            <person name="Stams A.J.M."/>
            <person name="Worm P."/>
            <person name="Henstra A.M."/>
            <person name="Richardson P."/>
        </authorList>
    </citation>
    <scope>NUCLEOTIDE SEQUENCE [LARGE SCALE GENOMIC DNA]</scope>
    <source>
        <strain>DSM 10017 / MPOB</strain>
    </source>
</reference>
<name>RS13_SYNFM</name>
<evidence type="ECO:0000255" key="1">
    <source>
        <dbReference type="HAMAP-Rule" id="MF_01315"/>
    </source>
</evidence>
<evidence type="ECO:0000256" key="2">
    <source>
        <dbReference type="SAM" id="MobiDB-lite"/>
    </source>
</evidence>
<evidence type="ECO:0000305" key="3"/>
<comment type="function">
    <text evidence="1">Located at the top of the head of the 30S subunit, it contacts several helices of the 16S rRNA. In the 70S ribosome it contacts the 23S rRNA (bridge B1a) and protein L5 of the 50S subunit (bridge B1b), connecting the 2 subunits; these bridges are implicated in subunit movement. Contacts the tRNAs in the A and P-sites.</text>
</comment>
<comment type="subunit">
    <text evidence="1">Part of the 30S ribosomal subunit. Forms a loose heterodimer with protein S19. Forms two bridges to the 50S subunit in the 70S ribosome.</text>
</comment>
<comment type="similarity">
    <text evidence="1">Belongs to the universal ribosomal protein uS13 family.</text>
</comment>
<keyword id="KW-1185">Reference proteome</keyword>
<keyword id="KW-0687">Ribonucleoprotein</keyword>
<keyword id="KW-0689">Ribosomal protein</keyword>
<keyword id="KW-0694">RNA-binding</keyword>
<keyword id="KW-0699">rRNA-binding</keyword>
<keyword id="KW-0820">tRNA-binding</keyword>
<accession>A0LIL4</accession>
<dbReference type="EMBL" id="CP000478">
    <property type="protein sequence ID" value="ABK17266.1"/>
    <property type="molecule type" value="Genomic_DNA"/>
</dbReference>
<dbReference type="RefSeq" id="WP_011698436.1">
    <property type="nucleotide sequence ID" value="NC_008554.1"/>
</dbReference>
<dbReference type="SMR" id="A0LIL4"/>
<dbReference type="FunCoup" id="A0LIL4">
    <property type="interactions" value="607"/>
</dbReference>
<dbReference type="STRING" id="335543.Sfum_1579"/>
<dbReference type="KEGG" id="sfu:Sfum_1579"/>
<dbReference type="eggNOG" id="COG0099">
    <property type="taxonomic scope" value="Bacteria"/>
</dbReference>
<dbReference type="HOGENOM" id="CLU_103849_1_2_7"/>
<dbReference type="InParanoid" id="A0LIL4"/>
<dbReference type="OrthoDB" id="9803610at2"/>
<dbReference type="Proteomes" id="UP000001784">
    <property type="component" value="Chromosome"/>
</dbReference>
<dbReference type="GO" id="GO:0005829">
    <property type="term" value="C:cytosol"/>
    <property type="evidence" value="ECO:0007669"/>
    <property type="project" value="TreeGrafter"/>
</dbReference>
<dbReference type="GO" id="GO:0015935">
    <property type="term" value="C:small ribosomal subunit"/>
    <property type="evidence" value="ECO:0007669"/>
    <property type="project" value="TreeGrafter"/>
</dbReference>
<dbReference type="GO" id="GO:0019843">
    <property type="term" value="F:rRNA binding"/>
    <property type="evidence" value="ECO:0007669"/>
    <property type="project" value="UniProtKB-UniRule"/>
</dbReference>
<dbReference type="GO" id="GO:0003735">
    <property type="term" value="F:structural constituent of ribosome"/>
    <property type="evidence" value="ECO:0007669"/>
    <property type="project" value="InterPro"/>
</dbReference>
<dbReference type="GO" id="GO:0000049">
    <property type="term" value="F:tRNA binding"/>
    <property type="evidence" value="ECO:0007669"/>
    <property type="project" value="UniProtKB-UniRule"/>
</dbReference>
<dbReference type="GO" id="GO:0006412">
    <property type="term" value="P:translation"/>
    <property type="evidence" value="ECO:0007669"/>
    <property type="project" value="UniProtKB-UniRule"/>
</dbReference>
<dbReference type="FunFam" id="1.10.8.50:FF:000001">
    <property type="entry name" value="30S ribosomal protein S13"/>
    <property type="match status" value="1"/>
</dbReference>
<dbReference type="FunFam" id="4.10.910.10:FF:000001">
    <property type="entry name" value="30S ribosomal protein S13"/>
    <property type="match status" value="1"/>
</dbReference>
<dbReference type="Gene3D" id="1.10.8.50">
    <property type="match status" value="1"/>
</dbReference>
<dbReference type="Gene3D" id="4.10.910.10">
    <property type="entry name" value="30s ribosomal protein s13, domain 2"/>
    <property type="match status" value="1"/>
</dbReference>
<dbReference type="HAMAP" id="MF_01315">
    <property type="entry name" value="Ribosomal_uS13"/>
    <property type="match status" value="1"/>
</dbReference>
<dbReference type="InterPro" id="IPR027437">
    <property type="entry name" value="Rbsml_uS13_C"/>
</dbReference>
<dbReference type="InterPro" id="IPR001892">
    <property type="entry name" value="Ribosomal_uS13"/>
</dbReference>
<dbReference type="InterPro" id="IPR010979">
    <property type="entry name" value="Ribosomal_uS13-like_H2TH"/>
</dbReference>
<dbReference type="InterPro" id="IPR019980">
    <property type="entry name" value="Ribosomal_uS13_bac-type"/>
</dbReference>
<dbReference type="InterPro" id="IPR018269">
    <property type="entry name" value="Ribosomal_uS13_CS"/>
</dbReference>
<dbReference type="NCBIfam" id="TIGR03631">
    <property type="entry name" value="uS13_bact"/>
    <property type="match status" value="1"/>
</dbReference>
<dbReference type="PANTHER" id="PTHR10871">
    <property type="entry name" value="30S RIBOSOMAL PROTEIN S13/40S RIBOSOMAL PROTEIN S18"/>
    <property type="match status" value="1"/>
</dbReference>
<dbReference type="PANTHER" id="PTHR10871:SF1">
    <property type="entry name" value="SMALL RIBOSOMAL SUBUNIT PROTEIN US13M"/>
    <property type="match status" value="1"/>
</dbReference>
<dbReference type="Pfam" id="PF00416">
    <property type="entry name" value="Ribosomal_S13"/>
    <property type="match status" value="1"/>
</dbReference>
<dbReference type="PIRSF" id="PIRSF002134">
    <property type="entry name" value="Ribosomal_S13"/>
    <property type="match status" value="1"/>
</dbReference>
<dbReference type="SUPFAM" id="SSF46946">
    <property type="entry name" value="S13-like H2TH domain"/>
    <property type="match status" value="1"/>
</dbReference>
<dbReference type="PROSITE" id="PS00646">
    <property type="entry name" value="RIBOSOMAL_S13_1"/>
    <property type="match status" value="1"/>
</dbReference>
<dbReference type="PROSITE" id="PS50159">
    <property type="entry name" value="RIBOSOMAL_S13_2"/>
    <property type="match status" value="1"/>
</dbReference>